<name>RS6_EREGS</name>
<protein>
    <recommendedName>
        <fullName evidence="3">Small ribosomal subunit protein eS6</fullName>
    </recommendedName>
    <alternativeName>
        <fullName>40S ribosomal protein S6</fullName>
    </alternativeName>
</protein>
<reference key="1">
    <citation type="journal article" date="2004" name="Science">
        <title>The Ashbya gossypii genome as a tool for mapping the ancient Saccharomyces cerevisiae genome.</title>
        <authorList>
            <person name="Dietrich F.S."/>
            <person name="Voegeli S."/>
            <person name="Brachat S."/>
            <person name="Lerch A."/>
            <person name="Gates K."/>
            <person name="Steiner S."/>
            <person name="Mohr C."/>
            <person name="Poehlmann R."/>
            <person name="Luedi P."/>
            <person name="Choi S."/>
            <person name="Wing R.A."/>
            <person name="Flavier A."/>
            <person name="Gaffney T.D."/>
            <person name="Philippsen P."/>
        </authorList>
    </citation>
    <scope>NUCLEOTIDE SEQUENCE [LARGE SCALE GENOMIC DNA]</scope>
    <source>
        <strain>ATCC 10895 / CBS 109.51 / FGSC 9923 / NRRL Y-1056</strain>
    </source>
</reference>
<reference key="2">
    <citation type="journal article" date="2013" name="G3 (Bethesda)">
        <title>Genomes of Ashbya fungi isolated from insects reveal four mating-type loci, numerous translocations, lack of transposons, and distinct gene duplications.</title>
        <authorList>
            <person name="Dietrich F.S."/>
            <person name="Voegeli S."/>
            <person name="Kuo S."/>
            <person name="Philippsen P."/>
        </authorList>
    </citation>
    <scope>GENOME REANNOTATION</scope>
    <source>
        <strain>ATCC 10895 / CBS 109.51 / FGSC 9923 / NRRL Y-1056</strain>
    </source>
</reference>
<sequence length="236" mass="26866">MKLNISYPVNGTQKTIEVDDEHRVRVFYDKRIGQEVNGEAVGDEFKGYVFKIAGGNDKQGFPMKQGVLLPTRVKLLMAKGTSCYRPRRNGERKRKSVRGAIVGPDLAVLALIITKKGDQEIEGITNESVPKRLGPKRANNIRKFFGLTKDDDVRDFVIRREVVKGDKTYTKAPKIQRLVTPQRLQRKRHQRALKVRNAQAQREAAAEYAQLLAKRLTEKKAEKAEERKRRASSLKA</sequence>
<organism>
    <name type="scientific">Eremothecium gossypii (strain ATCC 10895 / CBS 109.51 / FGSC 9923 / NRRL Y-1056)</name>
    <name type="common">Yeast</name>
    <name type="synonym">Ashbya gossypii</name>
    <dbReference type="NCBI Taxonomy" id="284811"/>
    <lineage>
        <taxon>Eukaryota</taxon>
        <taxon>Fungi</taxon>
        <taxon>Dikarya</taxon>
        <taxon>Ascomycota</taxon>
        <taxon>Saccharomycotina</taxon>
        <taxon>Saccharomycetes</taxon>
        <taxon>Saccharomycetales</taxon>
        <taxon>Saccharomycetaceae</taxon>
        <taxon>Eremothecium</taxon>
    </lineage>
</organism>
<keyword id="KW-0597">Phosphoprotein</keyword>
<keyword id="KW-1185">Reference proteome</keyword>
<keyword id="KW-0687">Ribonucleoprotein</keyword>
<keyword id="KW-0689">Ribosomal protein</keyword>
<gene>
    <name type="primary">RPS6</name>
    <name type="ordered locus">AGR197C</name>
</gene>
<evidence type="ECO:0000250" key="1"/>
<evidence type="ECO:0000255" key="2"/>
<evidence type="ECO:0000305" key="3"/>
<accession>Q74ZK3</accession>
<proteinExistence type="inferred from homology"/>
<dbReference type="EMBL" id="AE016820">
    <property type="protein sequence ID" value="AAS54687.1"/>
    <property type="molecule type" value="Genomic_DNA"/>
</dbReference>
<dbReference type="RefSeq" id="NP_986863.1">
    <property type="nucleotide sequence ID" value="NM_211925.1"/>
</dbReference>
<dbReference type="SMR" id="Q74ZK3"/>
<dbReference type="FunCoup" id="Q74ZK3">
    <property type="interactions" value="1190"/>
</dbReference>
<dbReference type="STRING" id="284811.Q74ZK3"/>
<dbReference type="EnsemblFungi" id="AAS54687">
    <property type="protein sequence ID" value="AAS54687"/>
    <property type="gene ID" value="AGOS_AGR197C"/>
</dbReference>
<dbReference type="GeneID" id="4623165"/>
<dbReference type="KEGG" id="ago:AGOS_AGR197C"/>
<dbReference type="eggNOG" id="KOG1646">
    <property type="taxonomic scope" value="Eukaryota"/>
</dbReference>
<dbReference type="HOGENOM" id="CLU_046346_0_1_1"/>
<dbReference type="InParanoid" id="Q74ZK3"/>
<dbReference type="OMA" id="KPRYKAP"/>
<dbReference type="OrthoDB" id="10260596at2759"/>
<dbReference type="Proteomes" id="UP000000591">
    <property type="component" value="Chromosome VII"/>
</dbReference>
<dbReference type="GO" id="GO:1990904">
    <property type="term" value="C:ribonucleoprotein complex"/>
    <property type="evidence" value="ECO:0007669"/>
    <property type="project" value="UniProtKB-KW"/>
</dbReference>
<dbReference type="GO" id="GO:0005840">
    <property type="term" value="C:ribosome"/>
    <property type="evidence" value="ECO:0007669"/>
    <property type="project" value="UniProtKB-KW"/>
</dbReference>
<dbReference type="GO" id="GO:0003735">
    <property type="term" value="F:structural constituent of ribosome"/>
    <property type="evidence" value="ECO:0007669"/>
    <property type="project" value="InterPro"/>
</dbReference>
<dbReference type="GO" id="GO:0006412">
    <property type="term" value="P:translation"/>
    <property type="evidence" value="ECO:0007669"/>
    <property type="project" value="InterPro"/>
</dbReference>
<dbReference type="FunFam" id="1.20.5.2650:FF:000001">
    <property type="entry name" value="40S ribosomal protein S6"/>
    <property type="match status" value="1"/>
</dbReference>
<dbReference type="Gene3D" id="1.20.5.2650">
    <property type="match status" value="1"/>
</dbReference>
<dbReference type="InterPro" id="IPR001377">
    <property type="entry name" value="Ribosomal_eS6"/>
</dbReference>
<dbReference type="InterPro" id="IPR014401">
    <property type="entry name" value="Ribosomal_eS6-like"/>
</dbReference>
<dbReference type="InterPro" id="IPR018282">
    <property type="entry name" value="Ribosomal_eS6_CS"/>
</dbReference>
<dbReference type="PANTHER" id="PTHR11502">
    <property type="entry name" value="40S RIBOSOMAL PROTEIN S6"/>
    <property type="match status" value="1"/>
</dbReference>
<dbReference type="Pfam" id="PF01092">
    <property type="entry name" value="Ribosomal_S6e"/>
    <property type="match status" value="1"/>
</dbReference>
<dbReference type="PIRSF" id="PIRSF002129">
    <property type="entry name" value="Ribosom_S6_euk"/>
    <property type="match status" value="1"/>
</dbReference>
<dbReference type="SMART" id="SM01405">
    <property type="entry name" value="Ribosomal_S6e"/>
    <property type="match status" value="1"/>
</dbReference>
<dbReference type="PROSITE" id="PS00578">
    <property type="entry name" value="RIBOSOMAL_S6E"/>
    <property type="match status" value="1"/>
</dbReference>
<comment type="PTM">
    <text evidence="1">Phosphorylated.</text>
</comment>
<comment type="similarity">
    <text evidence="3">Belongs to the eukaryotic ribosomal protein eS6 family.</text>
</comment>
<feature type="chain" id="PRO_0000137333" description="Small ribosomal subunit protein eS6">
    <location>
        <begin position="1"/>
        <end position="236"/>
    </location>
</feature>
<feature type="modified residue" description="Phosphoserine" evidence="2">
    <location>
        <position position="232"/>
    </location>
</feature>
<feature type="modified residue" description="Phosphoserine" evidence="2">
    <location>
        <position position="233"/>
    </location>
</feature>